<gene>
    <name evidence="3" type="primary">cdiB</name>
    <name type="ordered locus">ECP_4581</name>
</gene>
<protein>
    <recommendedName>
        <fullName evidence="4">Outer membrane transporter CdiB</fullName>
    </recommendedName>
</protein>
<proteinExistence type="inferred from homology"/>
<name>CDIB_ECOL5</name>
<comment type="function">
    <text evidence="5">Potential outer membrane protein component of a toxin-immunity protein module, which functions as a cellular contact-dependent growth inhibition (CDI) system. CDI modules allow bacteria to communicate with and inhibit the growth of closely related neighboring bacteria in a contact-dependent fashion. This protein may be required for secretion and assembly of the CdiA toxin protein.</text>
</comment>
<comment type="function">
    <text evidence="4">Probable member of a two partner secretion pathway (TPS) in which it mediates the secretion of CdiA.</text>
</comment>
<comment type="subcellular location">
    <subcellularLocation>
        <location evidence="5">Cell outer membrane</location>
    </subcellularLocation>
</comment>
<comment type="similarity">
    <text evidence="4">Belongs to the TPS (TC 1.B.20) family.</text>
</comment>
<feature type="chain" id="PRO_0000432083" description="Outer membrane transporter CdiB">
    <location>
        <begin position="1"/>
        <end position="588"/>
    </location>
</feature>
<feature type="transmembrane region" description="Helical" evidence="1">
    <location>
        <begin position="33"/>
        <end position="55"/>
    </location>
</feature>
<feature type="domain" description="POTRA" evidence="2">
    <location>
        <begin position="104"/>
        <end position="179"/>
    </location>
</feature>
<sequence>MQHRQDNLLANRNLLPGMVSGQYAFRIRTLSQVVRYFSLLPCLCILSFSSPAAMLSPGDRSAIQQQQQQLLDENQRQRDALERSAPLTITPSPETSAGTEGPCFTVSRIVVSGATRLTSAETDRLVAPWVNQCLNITGLTAVTDAVTDGYIRRGYITSRAFLTEQDLSGGVLHITVMEGRLQQIRAEGADLPGRTLKMVFPGMEGKVLNLRDIEQGMEQINRLRTESVQIEISPGDREGWSVVTLTALPEWPVTGSVGIDNSGQKNTGTGQLNGVLSFNNPLGLADNWFVRGGRSSDFSVSHDARNFAAGVSLPYGYTLVDYTYSWSDYLSTIDNRGWLWRSTGDLQTHRLGLSHVLFRNGNMKTALTGGLQHRIIHNYLDDVLLQGSSRKLTSFSVGLNHTHKFLGGVGTLNPVFTRGMPWFGAESDHGKRGDLPVNQFRKWSVSASFQRPVTDRVWWLTSAYAQWSPDRLHGVEQLSLGGESSVRGFKEQYISGNNGGYLRNELSWSLFSLPYVGTVRAVTALDGGWLHSDRDDPYSSGTLWGAAAGLSTTSGHVSGSFTAGLPLVYPDWLAPDHLTVYWRVAVAF</sequence>
<reference key="1">
    <citation type="journal article" date="2006" name="Mol. Microbiol.">
        <title>Role of pathogenicity island-associated integrases in the genome plasticity of uropathogenic Escherichia coli strain 536.</title>
        <authorList>
            <person name="Hochhut B."/>
            <person name="Wilde C."/>
            <person name="Balling G."/>
            <person name="Middendorf B."/>
            <person name="Dobrindt U."/>
            <person name="Brzuszkiewicz E."/>
            <person name="Gottschalk G."/>
            <person name="Carniel E."/>
            <person name="Hacker J."/>
        </authorList>
    </citation>
    <scope>NUCLEOTIDE SEQUENCE [LARGE SCALE GENOMIC DNA]</scope>
    <source>
        <strain>536 / UPEC</strain>
    </source>
</reference>
<reference key="2">
    <citation type="journal article" date="2010" name="Nature">
        <title>A widespread family of polymorphic contact-dependent toxin delivery systems in bacteria.</title>
        <authorList>
            <person name="Aoki S.K."/>
            <person name="Diner E.J."/>
            <person name="de Roodenbeke C.T."/>
            <person name="Burgess B.R."/>
            <person name="Poole S.J."/>
            <person name="Braaten B.A."/>
            <person name="Jones A.M."/>
            <person name="Webb J.S."/>
            <person name="Hayes C.S."/>
            <person name="Cotter P.A."/>
            <person name="Low D.A."/>
        </authorList>
    </citation>
    <scope>FUNCTION</scope>
    <source>
        <strain>536 / UPEC</strain>
    </source>
</reference>
<dbReference type="EMBL" id="CP000247">
    <property type="protein sequence ID" value="ABG72517.1"/>
    <property type="molecule type" value="Genomic_DNA"/>
</dbReference>
<dbReference type="RefSeq" id="WP_001164766.1">
    <property type="nucleotide sequence ID" value="NC_008253.1"/>
</dbReference>
<dbReference type="SMR" id="Q0T962"/>
<dbReference type="KEGG" id="ecp:ECP_4581"/>
<dbReference type="HOGENOM" id="CLU_020581_4_1_6"/>
<dbReference type="Proteomes" id="UP000009182">
    <property type="component" value="Chromosome"/>
</dbReference>
<dbReference type="GO" id="GO:0009279">
    <property type="term" value="C:cell outer membrane"/>
    <property type="evidence" value="ECO:0007669"/>
    <property type="project" value="UniProtKB-SubCell"/>
</dbReference>
<dbReference type="GO" id="GO:0098046">
    <property type="term" value="C:type V protein secretion system complex"/>
    <property type="evidence" value="ECO:0007669"/>
    <property type="project" value="TreeGrafter"/>
</dbReference>
<dbReference type="GO" id="GO:0008320">
    <property type="term" value="F:protein transmembrane transporter activity"/>
    <property type="evidence" value="ECO:0007669"/>
    <property type="project" value="TreeGrafter"/>
</dbReference>
<dbReference type="GO" id="GO:0046819">
    <property type="term" value="P:protein secretion by the type V secretion system"/>
    <property type="evidence" value="ECO:0007669"/>
    <property type="project" value="TreeGrafter"/>
</dbReference>
<dbReference type="Gene3D" id="3.10.20.310">
    <property type="entry name" value="membrane protein fhac"/>
    <property type="match status" value="1"/>
</dbReference>
<dbReference type="Gene3D" id="2.40.160.50">
    <property type="entry name" value="membrane protein fhac: a member of the omp85/tpsb transporter family"/>
    <property type="match status" value="1"/>
</dbReference>
<dbReference type="InterPro" id="IPR005565">
    <property type="entry name" value="Hemolysn_activator_HlyB_C"/>
</dbReference>
<dbReference type="InterPro" id="IPR013686">
    <property type="entry name" value="Polypept-transport_assoc_ShlB"/>
</dbReference>
<dbReference type="InterPro" id="IPR034746">
    <property type="entry name" value="POTRA"/>
</dbReference>
<dbReference type="InterPro" id="IPR035251">
    <property type="entry name" value="ShlB_POTRA"/>
</dbReference>
<dbReference type="InterPro" id="IPR027282">
    <property type="entry name" value="TPS"/>
</dbReference>
<dbReference type="InterPro" id="IPR051544">
    <property type="entry name" value="TPS_OM_transporter"/>
</dbReference>
<dbReference type="PANTHER" id="PTHR34597:SF3">
    <property type="entry name" value="OUTER MEMBRANE TRANSPORTER CDIB"/>
    <property type="match status" value="1"/>
</dbReference>
<dbReference type="PANTHER" id="PTHR34597">
    <property type="entry name" value="SLR1661 PROTEIN"/>
    <property type="match status" value="1"/>
</dbReference>
<dbReference type="Pfam" id="PF08479">
    <property type="entry name" value="POTRA_2"/>
    <property type="match status" value="1"/>
</dbReference>
<dbReference type="Pfam" id="PF17287">
    <property type="entry name" value="POTRA_3"/>
    <property type="match status" value="1"/>
</dbReference>
<dbReference type="Pfam" id="PF03865">
    <property type="entry name" value="ShlB"/>
    <property type="match status" value="1"/>
</dbReference>
<dbReference type="PIRSF" id="PIRSF029745">
    <property type="entry name" value="FhaC"/>
    <property type="match status" value="1"/>
</dbReference>
<dbReference type="PROSITE" id="PS51779">
    <property type="entry name" value="POTRA"/>
    <property type="match status" value="1"/>
</dbReference>
<organism>
    <name type="scientific">Escherichia coli O6:K15:H31 (strain 536 / UPEC)</name>
    <dbReference type="NCBI Taxonomy" id="362663"/>
    <lineage>
        <taxon>Bacteria</taxon>
        <taxon>Pseudomonadati</taxon>
        <taxon>Pseudomonadota</taxon>
        <taxon>Gammaproteobacteria</taxon>
        <taxon>Enterobacterales</taxon>
        <taxon>Enterobacteriaceae</taxon>
        <taxon>Escherichia</taxon>
    </lineage>
</organism>
<evidence type="ECO:0000255" key="1"/>
<evidence type="ECO:0000255" key="2">
    <source>
        <dbReference type="PROSITE-ProRule" id="PRU01115"/>
    </source>
</evidence>
<evidence type="ECO:0000303" key="3">
    <source>
    </source>
</evidence>
<evidence type="ECO:0000305" key="4"/>
<evidence type="ECO:0000305" key="5">
    <source>
    </source>
</evidence>
<accession>Q0T962</accession>
<keyword id="KW-0998">Cell outer membrane</keyword>
<keyword id="KW-0472">Membrane</keyword>
<keyword id="KW-0653">Protein transport</keyword>
<keyword id="KW-0812">Transmembrane</keyword>
<keyword id="KW-1134">Transmembrane beta strand</keyword>
<keyword id="KW-1133">Transmembrane helix</keyword>
<keyword id="KW-0813">Transport</keyword>